<accession>Q5H9J7</accession>
<accession>Q569J0</accession>
<accession>Q56A74</accession>
<gene>
    <name type="primary">BEX5</name>
    <name type="synonym">NADE2</name>
    <name type="synonym">NGFRAP1L1</name>
</gene>
<name>BEX5_HUMAN</name>
<keyword id="KW-0963">Cytoplasm</keyword>
<keyword id="KW-0479">Metal-binding</keyword>
<keyword id="KW-1267">Proteomics identification</keyword>
<keyword id="KW-1185">Reference proteome</keyword>
<keyword id="KW-0832">Ubl conjugation</keyword>
<keyword id="KW-0862">Zinc</keyword>
<evidence type="ECO:0000250" key="1">
    <source>
        <dbReference type="UniProtKB" id="Q9WTZ9"/>
    </source>
</evidence>
<evidence type="ECO:0000256" key="2">
    <source>
        <dbReference type="SAM" id="MobiDB-lite"/>
    </source>
</evidence>
<evidence type="ECO:0000269" key="3">
    <source>
    </source>
</evidence>
<evidence type="ECO:0000305" key="4"/>
<evidence type="ECO:0000305" key="5">
    <source>
    </source>
</evidence>
<organism>
    <name type="scientific">Homo sapiens</name>
    <name type="common">Human</name>
    <dbReference type="NCBI Taxonomy" id="9606"/>
    <lineage>
        <taxon>Eukaryota</taxon>
        <taxon>Metazoa</taxon>
        <taxon>Chordata</taxon>
        <taxon>Craniata</taxon>
        <taxon>Vertebrata</taxon>
        <taxon>Euteleostomi</taxon>
        <taxon>Mammalia</taxon>
        <taxon>Eutheria</taxon>
        <taxon>Euarchontoglires</taxon>
        <taxon>Primates</taxon>
        <taxon>Haplorrhini</taxon>
        <taxon>Catarrhini</taxon>
        <taxon>Hominidae</taxon>
        <taxon>Homo</taxon>
    </lineage>
</organism>
<sequence length="111" mass="12602">MENVPKENKVVEKAPVQNEAPALGGGEYQEPGGNVKGVWAPPAPGFGEDVPNRLVDNIDMIDGDGDDMERFMEEMRELRRKIRELQLRYSLRILIGDPPHHDHHDEFCLMP</sequence>
<dbReference type="EMBL" id="AY833564">
    <property type="protein sequence ID" value="AAX40682.1"/>
    <property type="molecule type" value="mRNA"/>
</dbReference>
<dbReference type="EMBL" id="Z70719">
    <property type="status" value="NOT_ANNOTATED_CDS"/>
    <property type="molecule type" value="Genomic_DNA"/>
</dbReference>
<dbReference type="EMBL" id="BC042818">
    <property type="protein sequence ID" value="AAH42818.1"/>
    <property type="molecule type" value="mRNA"/>
</dbReference>
<dbReference type="EMBL" id="BC092450">
    <property type="protein sequence ID" value="AAH92450.1"/>
    <property type="molecule type" value="mRNA"/>
</dbReference>
<dbReference type="EMBL" id="BC106955">
    <property type="protein sequence ID" value="AAI06956.1"/>
    <property type="molecule type" value="mRNA"/>
</dbReference>
<dbReference type="CCDS" id="CCDS35350.1"/>
<dbReference type="RefSeq" id="NP_001012996.1">
    <property type="nucleotide sequence ID" value="NM_001012978.3"/>
</dbReference>
<dbReference type="RefSeq" id="NP_001153032.1">
    <property type="nucleotide sequence ID" value="NM_001159560.2"/>
</dbReference>
<dbReference type="SMR" id="Q5H9J7"/>
<dbReference type="BioGRID" id="131069">
    <property type="interactions" value="28"/>
</dbReference>
<dbReference type="FunCoup" id="Q5H9J7">
    <property type="interactions" value="59"/>
</dbReference>
<dbReference type="IntAct" id="Q5H9J7">
    <property type="interactions" value="35"/>
</dbReference>
<dbReference type="STRING" id="9606.ENSP00000446054"/>
<dbReference type="iPTMnet" id="Q5H9J7"/>
<dbReference type="PhosphoSitePlus" id="Q5H9J7"/>
<dbReference type="BioMuta" id="BEX5"/>
<dbReference type="DMDM" id="74755456"/>
<dbReference type="MassIVE" id="Q5H9J7"/>
<dbReference type="PaxDb" id="9606-ENSP00000446054"/>
<dbReference type="PeptideAtlas" id="Q5H9J7"/>
<dbReference type="ProteomicsDB" id="62890"/>
<dbReference type="Antibodypedia" id="28852">
    <property type="antibodies" value="34 antibodies from 8 providers"/>
</dbReference>
<dbReference type="DNASU" id="340542"/>
<dbReference type="Ensembl" id="ENST00000333643.4">
    <property type="protein sequence ID" value="ENSP00000328030.3"/>
    <property type="gene ID" value="ENSG00000184515.11"/>
</dbReference>
<dbReference type="Ensembl" id="ENST00000543160.5">
    <property type="protein sequence ID" value="ENSP00000446054.1"/>
    <property type="gene ID" value="ENSG00000184515.11"/>
</dbReference>
<dbReference type="Ensembl" id="ENST00000708878.1">
    <property type="protein sequence ID" value="ENSP00000517394.1"/>
    <property type="gene ID" value="ENSG00000291824.1"/>
</dbReference>
<dbReference type="Ensembl" id="ENST00000708879.1">
    <property type="protein sequence ID" value="ENSP00000517395.1"/>
    <property type="gene ID" value="ENSG00000291824.1"/>
</dbReference>
<dbReference type="GeneID" id="340542"/>
<dbReference type="KEGG" id="hsa:340542"/>
<dbReference type="MANE-Select" id="ENST00000333643.4">
    <property type="protein sequence ID" value="ENSP00000328030.3"/>
    <property type="RefSeq nucleotide sequence ID" value="NM_001012978.3"/>
    <property type="RefSeq protein sequence ID" value="NP_001012996.1"/>
</dbReference>
<dbReference type="UCSC" id="uc004eir.4">
    <property type="organism name" value="human"/>
</dbReference>
<dbReference type="AGR" id="HGNC:27990"/>
<dbReference type="CTD" id="340542"/>
<dbReference type="DisGeNET" id="340542"/>
<dbReference type="GeneCards" id="BEX5"/>
<dbReference type="HGNC" id="HGNC:27990">
    <property type="gene designation" value="BEX5"/>
</dbReference>
<dbReference type="HPA" id="ENSG00000184515">
    <property type="expression patterns" value="Tissue enhanced (brain, pituitary gland)"/>
</dbReference>
<dbReference type="MIM" id="300693">
    <property type="type" value="gene"/>
</dbReference>
<dbReference type="neXtProt" id="NX_Q5H9J7"/>
<dbReference type="OpenTargets" id="ENSG00000184515"/>
<dbReference type="PharmGKB" id="PA162377554"/>
<dbReference type="VEuPathDB" id="HostDB:ENSG00000184515"/>
<dbReference type="eggNOG" id="ENOG502R12Q">
    <property type="taxonomic scope" value="Eukaryota"/>
</dbReference>
<dbReference type="GeneTree" id="ENSGT00940000153412"/>
<dbReference type="HOGENOM" id="CLU_123122_0_0_1"/>
<dbReference type="InParanoid" id="Q5H9J7"/>
<dbReference type="OMA" id="GNIRGEW"/>
<dbReference type="OrthoDB" id="9829209at2759"/>
<dbReference type="PAN-GO" id="Q5H9J7">
    <property type="GO annotations" value="3 GO annotations based on evolutionary models"/>
</dbReference>
<dbReference type="PhylomeDB" id="Q5H9J7"/>
<dbReference type="TreeFam" id="TF337909"/>
<dbReference type="PathwayCommons" id="Q5H9J7"/>
<dbReference type="SignaLink" id="Q5H9J7"/>
<dbReference type="BioGRID-ORCS" id="340542">
    <property type="hits" value="12 hits in 770 CRISPR screens"/>
</dbReference>
<dbReference type="ChiTaRS" id="BEX5">
    <property type="organism name" value="human"/>
</dbReference>
<dbReference type="GenomeRNAi" id="340542"/>
<dbReference type="Pharos" id="Q5H9J7">
    <property type="development level" value="Tdark"/>
</dbReference>
<dbReference type="PRO" id="PR:Q5H9J7"/>
<dbReference type="Proteomes" id="UP000005640">
    <property type="component" value="Chromosome X"/>
</dbReference>
<dbReference type="RNAct" id="Q5H9J7">
    <property type="molecule type" value="protein"/>
</dbReference>
<dbReference type="Bgee" id="ENSG00000184515">
    <property type="expression patterns" value="Expressed in endothelial cell and 164 other cell types or tissues"/>
</dbReference>
<dbReference type="GO" id="GO:0005737">
    <property type="term" value="C:cytoplasm"/>
    <property type="evidence" value="ECO:0000318"/>
    <property type="project" value="GO_Central"/>
</dbReference>
<dbReference type="GO" id="GO:0046872">
    <property type="term" value="F:metal ion binding"/>
    <property type="evidence" value="ECO:0007669"/>
    <property type="project" value="UniProtKB-KW"/>
</dbReference>
<dbReference type="GO" id="GO:0005102">
    <property type="term" value="F:signaling receptor binding"/>
    <property type="evidence" value="ECO:0000318"/>
    <property type="project" value="GO_Central"/>
</dbReference>
<dbReference type="GO" id="GO:0007165">
    <property type="term" value="P:signal transduction"/>
    <property type="evidence" value="ECO:0000318"/>
    <property type="project" value="GO_Central"/>
</dbReference>
<dbReference type="InterPro" id="IPR007623">
    <property type="entry name" value="BEX"/>
</dbReference>
<dbReference type="InterPro" id="IPR021156">
    <property type="entry name" value="TF_A-like/BEX"/>
</dbReference>
<dbReference type="PANTHER" id="PTHR19430">
    <property type="entry name" value="PROTEIN BEX1-RELATED"/>
    <property type="match status" value="1"/>
</dbReference>
<dbReference type="PANTHER" id="PTHR19430:SF0">
    <property type="entry name" value="PROTEIN BEX5"/>
    <property type="match status" value="1"/>
</dbReference>
<dbReference type="Pfam" id="PF04538">
    <property type="entry name" value="BEX"/>
    <property type="match status" value="1"/>
</dbReference>
<dbReference type="PIRSF" id="PIRSF008633">
    <property type="entry name" value="BEX"/>
    <property type="match status" value="1"/>
</dbReference>
<reference key="1">
    <citation type="journal article" date="2005" name="Gene">
        <title>Characterization of the Bex gene family in humans, mice, and rats.</title>
        <authorList>
            <person name="Alvarez E."/>
            <person name="Zhou W."/>
            <person name="Witta S.E."/>
            <person name="Freed C.R."/>
        </authorList>
    </citation>
    <scope>NUCLEOTIDE SEQUENCE [MRNA]</scope>
    <scope>SUBCELLULAR LOCATION</scope>
    <scope>DEGRADATION BY THE PROTEASOME</scope>
</reference>
<reference key="2">
    <citation type="journal article" date="2005" name="Nature">
        <title>The DNA sequence of the human X chromosome.</title>
        <authorList>
            <person name="Ross M.T."/>
            <person name="Grafham D.V."/>
            <person name="Coffey A.J."/>
            <person name="Scherer S."/>
            <person name="McLay K."/>
            <person name="Muzny D."/>
            <person name="Platzer M."/>
            <person name="Howell G.R."/>
            <person name="Burrows C."/>
            <person name="Bird C.P."/>
            <person name="Frankish A."/>
            <person name="Lovell F.L."/>
            <person name="Howe K.L."/>
            <person name="Ashurst J.L."/>
            <person name="Fulton R.S."/>
            <person name="Sudbrak R."/>
            <person name="Wen G."/>
            <person name="Jones M.C."/>
            <person name="Hurles M.E."/>
            <person name="Andrews T.D."/>
            <person name="Scott C.E."/>
            <person name="Searle S."/>
            <person name="Ramser J."/>
            <person name="Whittaker A."/>
            <person name="Deadman R."/>
            <person name="Carter N.P."/>
            <person name="Hunt S.E."/>
            <person name="Chen R."/>
            <person name="Cree A."/>
            <person name="Gunaratne P."/>
            <person name="Havlak P."/>
            <person name="Hodgson A."/>
            <person name="Metzker M.L."/>
            <person name="Richards S."/>
            <person name="Scott G."/>
            <person name="Steffen D."/>
            <person name="Sodergren E."/>
            <person name="Wheeler D.A."/>
            <person name="Worley K.C."/>
            <person name="Ainscough R."/>
            <person name="Ambrose K.D."/>
            <person name="Ansari-Lari M.A."/>
            <person name="Aradhya S."/>
            <person name="Ashwell R.I."/>
            <person name="Babbage A.K."/>
            <person name="Bagguley C.L."/>
            <person name="Ballabio A."/>
            <person name="Banerjee R."/>
            <person name="Barker G.E."/>
            <person name="Barlow K.F."/>
            <person name="Barrett I.P."/>
            <person name="Bates K.N."/>
            <person name="Beare D.M."/>
            <person name="Beasley H."/>
            <person name="Beasley O."/>
            <person name="Beck A."/>
            <person name="Bethel G."/>
            <person name="Blechschmidt K."/>
            <person name="Brady N."/>
            <person name="Bray-Allen S."/>
            <person name="Bridgeman A.M."/>
            <person name="Brown A.J."/>
            <person name="Brown M.J."/>
            <person name="Bonnin D."/>
            <person name="Bruford E.A."/>
            <person name="Buhay C."/>
            <person name="Burch P."/>
            <person name="Burford D."/>
            <person name="Burgess J."/>
            <person name="Burrill W."/>
            <person name="Burton J."/>
            <person name="Bye J.M."/>
            <person name="Carder C."/>
            <person name="Carrel L."/>
            <person name="Chako J."/>
            <person name="Chapman J.C."/>
            <person name="Chavez D."/>
            <person name="Chen E."/>
            <person name="Chen G."/>
            <person name="Chen Y."/>
            <person name="Chen Z."/>
            <person name="Chinault C."/>
            <person name="Ciccodicola A."/>
            <person name="Clark S.Y."/>
            <person name="Clarke G."/>
            <person name="Clee C.M."/>
            <person name="Clegg S."/>
            <person name="Clerc-Blankenburg K."/>
            <person name="Clifford K."/>
            <person name="Cobley V."/>
            <person name="Cole C.G."/>
            <person name="Conquer J.S."/>
            <person name="Corby N."/>
            <person name="Connor R.E."/>
            <person name="David R."/>
            <person name="Davies J."/>
            <person name="Davis C."/>
            <person name="Davis J."/>
            <person name="Delgado O."/>
            <person name="Deshazo D."/>
            <person name="Dhami P."/>
            <person name="Ding Y."/>
            <person name="Dinh H."/>
            <person name="Dodsworth S."/>
            <person name="Draper H."/>
            <person name="Dugan-Rocha S."/>
            <person name="Dunham A."/>
            <person name="Dunn M."/>
            <person name="Durbin K.J."/>
            <person name="Dutta I."/>
            <person name="Eades T."/>
            <person name="Ellwood M."/>
            <person name="Emery-Cohen A."/>
            <person name="Errington H."/>
            <person name="Evans K.L."/>
            <person name="Faulkner L."/>
            <person name="Francis F."/>
            <person name="Frankland J."/>
            <person name="Fraser A.E."/>
            <person name="Galgoczy P."/>
            <person name="Gilbert J."/>
            <person name="Gill R."/>
            <person name="Gloeckner G."/>
            <person name="Gregory S.G."/>
            <person name="Gribble S."/>
            <person name="Griffiths C."/>
            <person name="Grocock R."/>
            <person name="Gu Y."/>
            <person name="Gwilliam R."/>
            <person name="Hamilton C."/>
            <person name="Hart E.A."/>
            <person name="Hawes A."/>
            <person name="Heath P.D."/>
            <person name="Heitmann K."/>
            <person name="Hennig S."/>
            <person name="Hernandez J."/>
            <person name="Hinzmann B."/>
            <person name="Ho S."/>
            <person name="Hoffs M."/>
            <person name="Howden P.J."/>
            <person name="Huckle E.J."/>
            <person name="Hume J."/>
            <person name="Hunt P.J."/>
            <person name="Hunt A.R."/>
            <person name="Isherwood J."/>
            <person name="Jacob L."/>
            <person name="Johnson D."/>
            <person name="Jones S."/>
            <person name="de Jong P.J."/>
            <person name="Joseph S.S."/>
            <person name="Keenan S."/>
            <person name="Kelly S."/>
            <person name="Kershaw J.K."/>
            <person name="Khan Z."/>
            <person name="Kioschis P."/>
            <person name="Klages S."/>
            <person name="Knights A.J."/>
            <person name="Kosiura A."/>
            <person name="Kovar-Smith C."/>
            <person name="Laird G.K."/>
            <person name="Langford C."/>
            <person name="Lawlor S."/>
            <person name="Leversha M."/>
            <person name="Lewis L."/>
            <person name="Liu W."/>
            <person name="Lloyd C."/>
            <person name="Lloyd D.M."/>
            <person name="Loulseged H."/>
            <person name="Loveland J.E."/>
            <person name="Lovell J.D."/>
            <person name="Lozado R."/>
            <person name="Lu J."/>
            <person name="Lyne R."/>
            <person name="Ma J."/>
            <person name="Maheshwari M."/>
            <person name="Matthews L.H."/>
            <person name="McDowall J."/>
            <person name="McLaren S."/>
            <person name="McMurray A."/>
            <person name="Meidl P."/>
            <person name="Meitinger T."/>
            <person name="Milne S."/>
            <person name="Miner G."/>
            <person name="Mistry S.L."/>
            <person name="Morgan M."/>
            <person name="Morris S."/>
            <person name="Mueller I."/>
            <person name="Mullikin J.C."/>
            <person name="Nguyen N."/>
            <person name="Nordsiek G."/>
            <person name="Nyakatura G."/>
            <person name="O'dell C.N."/>
            <person name="Okwuonu G."/>
            <person name="Palmer S."/>
            <person name="Pandian R."/>
            <person name="Parker D."/>
            <person name="Parrish J."/>
            <person name="Pasternak S."/>
            <person name="Patel D."/>
            <person name="Pearce A.V."/>
            <person name="Pearson D.M."/>
            <person name="Pelan S.E."/>
            <person name="Perez L."/>
            <person name="Porter K.M."/>
            <person name="Ramsey Y."/>
            <person name="Reichwald K."/>
            <person name="Rhodes S."/>
            <person name="Ridler K.A."/>
            <person name="Schlessinger D."/>
            <person name="Schueler M.G."/>
            <person name="Sehra H.K."/>
            <person name="Shaw-Smith C."/>
            <person name="Shen H."/>
            <person name="Sheridan E.M."/>
            <person name="Shownkeen R."/>
            <person name="Skuce C.D."/>
            <person name="Smith M.L."/>
            <person name="Sotheran E.C."/>
            <person name="Steingruber H.E."/>
            <person name="Steward C.A."/>
            <person name="Storey R."/>
            <person name="Swann R.M."/>
            <person name="Swarbreck D."/>
            <person name="Tabor P.E."/>
            <person name="Taudien S."/>
            <person name="Taylor T."/>
            <person name="Teague B."/>
            <person name="Thomas K."/>
            <person name="Thorpe A."/>
            <person name="Timms K."/>
            <person name="Tracey A."/>
            <person name="Trevanion S."/>
            <person name="Tromans A.C."/>
            <person name="d'Urso M."/>
            <person name="Verduzco D."/>
            <person name="Villasana D."/>
            <person name="Waldron L."/>
            <person name="Wall M."/>
            <person name="Wang Q."/>
            <person name="Warren J."/>
            <person name="Warry G.L."/>
            <person name="Wei X."/>
            <person name="West A."/>
            <person name="Whitehead S.L."/>
            <person name="Whiteley M.N."/>
            <person name="Wilkinson J.E."/>
            <person name="Willey D.L."/>
            <person name="Williams G."/>
            <person name="Williams L."/>
            <person name="Williamson A."/>
            <person name="Williamson H."/>
            <person name="Wilming L."/>
            <person name="Woodmansey R.L."/>
            <person name="Wray P.W."/>
            <person name="Yen J."/>
            <person name="Zhang J."/>
            <person name="Zhou J."/>
            <person name="Zoghbi H."/>
            <person name="Zorilla S."/>
            <person name="Buck D."/>
            <person name="Reinhardt R."/>
            <person name="Poustka A."/>
            <person name="Rosenthal A."/>
            <person name="Lehrach H."/>
            <person name="Meindl A."/>
            <person name="Minx P.J."/>
            <person name="Hillier L.W."/>
            <person name="Willard H.F."/>
            <person name="Wilson R.K."/>
            <person name="Waterston R.H."/>
            <person name="Rice C.M."/>
            <person name="Vaudin M."/>
            <person name="Coulson A."/>
            <person name="Nelson D.L."/>
            <person name="Weinstock G."/>
            <person name="Sulston J.E."/>
            <person name="Durbin R.M."/>
            <person name="Hubbard T."/>
            <person name="Gibbs R.A."/>
            <person name="Beck S."/>
            <person name="Rogers J."/>
            <person name="Bentley D.R."/>
        </authorList>
    </citation>
    <scope>NUCLEOTIDE SEQUENCE [LARGE SCALE GENOMIC DNA]</scope>
</reference>
<reference key="3">
    <citation type="journal article" date="2004" name="Genome Res.">
        <title>The status, quality, and expansion of the NIH full-length cDNA project: the Mammalian Gene Collection (MGC).</title>
        <authorList>
            <consortium name="The MGC Project Team"/>
        </authorList>
    </citation>
    <scope>NUCLEOTIDE SEQUENCE [LARGE SCALE MRNA]</scope>
    <source>
        <tissue>Brain</tissue>
    </source>
</reference>
<reference key="4">
    <citation type="journal article" date="2005" name="J. Comp. Neurol.">
        <title>Immunolocalization of Bex protein in the mouse brain and olfactory system.</title>
        <authorList>
            <person name="Koo J.H."/>
            <person name="Saraswati M."/>
            <person name="Margolis F.L."/>
        </authorList>
    </citation>
    <scope>CAUTION</scope>
</reference>
<protein>
    <recommendedName>
        <fullName>Protein BEX5</fullName>
    </recommendedName>
    <alternativeName>
        <fullName>Brain-expressed X-linked protein 5</fullName>
    </alternativeName>
    <alternativeName>
        <fullName>NGFRAP1-like protein 1</fullName>
    </alternativeName>
    <alternativeName>
        <fullName>Nerve growth factor receptor-associated protein 2</fullName>
    </alternativeName>
</protein>
<proteinExistence type="evidence at protein level"/>
<feature type="chain" id="PRO_0000229788" description="Protein BEX5">
    <location>
        <begin position="1"/>
        <end position="111"/>
    </location>
</feature>
<feature type="region of interest" description="Disordered" evidence="2">
    <location>
        <begin position="1"/>
        <end position="37"/>
    </location>
</feature>
<feature type="region of interest" description="His cluster" evidence="1">
    <location>
        <begin position="100"/>
        <end position="104"/>
    </location>
</feature>
<feature type="compositionally biased region" description="Basic and acidic residues" evidence="2">
    <location>
        <begin position="1"/>
        <end position="12"/>
    </location>
</feature>
<feature type="binding site" evidence="1">
    <location>
        <position position="108"/>
    </location>
    <ligand>
        <name>Zn(2+)</name>
        <dbReference type="ChEBI" id="CHEBI:29105"/>
        <note>ligand shared with FEM1B</note>
    </ligand>
</feature>
<feature type="sequence conflict" description="In Ref. 3; AAH92450." evidence="4" ref="3">
    <original>E</original>
    <variation>G</variation>
    <location>
        <position position="27"/>
    </location>
</feature>
<feature type="sequence conflict" description="In Ref. 3; AAH42818." evidence="4" ref="3">
    <original>P</original>
    <variation>H</variation>
    <location>
        <position position="42"/>
    </location>
</feature>
<comment type="interaction">
    <interactant intactId="EBI-10243741">
        <id>Q5H9J7</id>
    </interactant>
    <interactant intactId="EBI-10229433">
        <id>Q13515</id>
        <label>BFSP2</label>
    </interactant>
    <organismsDiffer>false</organismsDiffer>
    <experiments>3</experiments>
</comment>
<comment type="interaction">
    <interactant intactId="EBI-10243741">
        <id>Q5H9J7</id>
    </interactant>
    <interactant intactId="EBI-2510162">
        <id>Q9H9Q2</id>
        <label>COPS7B</label>
    </interactant>
    <organismsDiffer>false</organismsDiffer>
    <experiments>3</experiments>
</comment>
<comment type="interaction">
    <interactant intactId="EBI-10243741">
        <id>Q5H9J7</id>
    </interactant>
    <interactant intactId="EBI-10976677">
        <id>G5E9A7</id>
        <label>DMWD</label>
    </interactant>
    <organismsDiffer>false</organismsDiffer>
    <experiments>3</experiments>
</comment>
<comment type="interaction">
    <interactant intactId="EBI-10243741">
        <id>Q5H9J7</id>
    </interactant>
    <interactant intactId="EBI-21603100">
        <id>P26378-2</id>
        <label>ELAVL4</label>
    </interactant>
    <organismsDiffer>false</organismsDiffer>
    <experiments>3</experiments>
</comment>
<comment type="interaction">
    <interactant intactId="EBI-10243741">
        <id>Q5H9J7</id>
    </interactant>
    <interactant intactId="EBI-744586">
        <id>Q9Y6C2</id>
        <label>EMILIN1</label>
    </interactant>
    <organismsDiffer>false</organismsDiffer>
    <experiments>4</experiments>
</comment>
<comment type="interaction">
    <interactant intactId="EBI-10243741">
        <id>Q5H9J7</id>
    </interactant>
    <interactant intactId="EBI-2513774">
        <id>O95363</id>
        <label>FARS2</label>
    </interactant>
    <organismsDiffer>false</organismsDiffer>
    <experiments>3</experiments>
</comment>
<comment type="interaction">
    <interactant intactId="EBI-10243741">
        <id>Q5H9J7</id>
    </interactant>
    <interactant intactId="EBI-348399">
        <id>P22607</id>
        <label>FGFR3</label>
    </interactant>
    <organismsDiffer>false</organismsDiffer>
    <experiments>3</experiments>
</comment>
<comment type="interaction">
    <interactant intactId="EBI-10243741">
        <id>Q5H9J7</id>
    </interactant>
    <interactant intactId="EBI-10226858">
        <id>Q0VDC6</id>
        <label>FKBP1A</label>
    </interactant>
    <organismsDiffer>false</organismsDiffer>
    <experiments>3</experiments>
</comment>
<comment type="interaction">
    <interactant intactId="EBI-10243741">
        <id>Q5H9J7</id>
    </interactant>
    <interactant intactId="EBI-11961494">
        <id>Q6VB84</id>
        <label>FOXD4L3</label>
    </interactant>
    <organismsDiffer>false</organismsDiffer>
    <experiments>3</experiments>
</comment>
<comment type="interaction">
    <interactant intactId="EBI-10243741">
        <id>Q5H9J7</id>
    </interactant>
    <interactant intactId="EBI-11427343">
        <id>Q9P2W3</id>
        <label>GNG13</label>
    </interactant>
    <organismsDiffer>false</organismsDiffer>
    <experiments>3</experiments>
</comment>
<comment type="interaction">
    <interactant intactId="EBI-10243741">
        <id>Q5H9J7</id>
    </interactant>
    <interactant intactId="EBI-10181260">
        <id>Q08AF8</id>
        <label>GOLGA8G</label>
    </interactant>
    <organismsDiffer>false</organismsDiffer>
    <experiments>3</experiments>
</comment>
<comment type="interaction">
    <interactant intactId="EBI-10243741">
        <id>Q5H9J7</id>
    </interactant>
    <interactant intactId="EBI-351506">
        <id>P06396</id>
        <label>GSN</label>
    </interactant>
    <organismsDiffer>false</organismsDiffer>
    <experiments>3</experiments>
</comment>
<comment type="interaction">
    <interactant intactId="EBI-10243741">
        <id>Q5H9J7</id>
    </interactant>
    <interactant intactId="EBI-1054873">
        <id>Q9Y5Q9</id>
        <label>GTF3C3</label>
    </interactant>
    <organismsDiffer>false</organismsDiffer>
    <experiments>3</experiments>
</comment>
<comment type="interaction">
    <interactant intactId="EBI-10243741">
        <id>Q5H9J7</id>
    </interactant>
    <interactant intactId="EBI-10263367">
        <id>A0A0C4DG38</id>
        <label>ING3</label>
    </interactant>
    <organismsDiffer>false</organismsDiffer>
    <experiments>3</experiments>
</comment>
<comment type="interaction">
    <interactant intactId="EBI-10243741">
        <id>Q5H9J7</id>
    </interactant>
    <interactant intactId="EBI-347619">
        <id>O15116</id>
        <label>LSM1</label>
    </interactant>
    <organismsDiffer>false</organismsDiffer>
    <experiments>3</experiments>
</comment>
<comment type="interaction">
    <interactant intactId="EBI-10243741">
        <id>Q5H9J7</id>
    </interactant>
    <interactant intactId="EBI-10182930">
        <id>P43361</id>
        <label>MAGEA8</label>
    </interactant>
    <organismsDiffer>false</organismsDiffer>
    <experiments>7</experiments>
</comment>
<comment type="interaction">
    <interactant intactId="EBI-10243741">
        <id>Q5H9J7</id>
    </interactant>
    <interactant intactId="EBI-10288852">
        <id>Q9UBU8-2</id>
        <label>MORF4L1</label>
    </interactant>
    <organismsDiffer>false</organismsDiffer>
    <experiments>3</experiments>
</comment>
<comment type="interaction">
    <interactant intactId="EBI-10243741">
        <id>Q5H9J7</id>
    </interactant>
    <interactant intactId="EBI-399257">
        <id>Q15014</id>
        <label>MORF4L2</label>
    </interactant>
    <organismsDiffer>false</organismsDiffer>
    <experiments>3</experiments>
</comment>
<comment type="interaction">
    <interactant intactId="EBI-10243741">
        <id>Q5H9J7</id>
    </interactant>
    <interactant intactId="EBI-1246261">
        <id>O14561</id>
        <label>NDUFAB1</label>
    </interactant>
    <organismsDiffer>false</organismsDiffer>
    <experiments>3</experiments>
</comment>
<comment type="interaction">
    <interactant intactId="EBI-10243741">
        <id>Q5H9J7</id>
    </interactant>
    <interactant intactId="EBI-1014514">
        <id>P35240-4</id>
        <label>NF2</label>
    </interactant>
    <organismsDiffer>false</organismsDiffer>
    <experiments>3</experiments>
</comment>
<comment type="interaction">
    <interactant intactId="EBI-10243741">
        <id>Q5H9J7</id>
    </interactant>
    <interactant intactId="EBI-10694433">
        <id>Q8N7B6-2</id>
        <label>PACRGL</label>
    </interactant>
    <organismsDiffer>false</organismsDiffer>
    <experiments>3</experiments>
</comment>
<comment type="interaction">
    <interactant intactId="EBI-10243741">
        <id>Q5H9J7</id>
    </interactant>
    <interactant intactId="EBI-5235340">
        <id>Q7Z699</id>
        <label>SPRED1</label>
    </interactant>
    <organismsDiffer>false</organismsDiffer>
    <experiments>3</experiments>
</comment>
<comment type="interaction">
    <interactant intactId="EBI-10243741">
        <id>Q5H9J7</id>
    </interactant>
    <interactant intactId="EBI-372899">
        <id>Q13148</id>
        <label>TARDBP</label>
    </interactant>
    <organismsDiffer>false</organismsDiffer>
    <experiments>6</experiments>
</comment>
<comment type="subcellular location">
    <subcellularLocation>
        <location evidence="3">Cytoplasm</location>
    </subcellularLocation>
</comment>
<comment type="PTM">
    <text evidence="3">Ubiquitinated (PubMed:15958283). Degraded by the proteasome (PubMed:15958283).</text>
</comment>
<comment type="miscellaneous">
    <text evidence="5">The mouse orthologous protein seems not to exist. A publication described a sequence that they named Bex5, but it probably represents a pseudogene (PubMed:15861462).</text>
</comment>
<comment type="similarity">
    <text evidence="4">Belongs to the BEX family.</text>
</comment>